<gene>
    <name type="primary">SKIP28</name>
    <name type="synonym">MEE11</name>
    <name type="ordered locus">At2g01620</name>
    <name type="ORF">T8O11.21</name>
</gene>
<accession>Q9ZU90</accession>
<accession>Q8LGD0</accession>
<dbReference type="EMBL" id="AC006069">
    <property type="protein sequence ID" value="AAD12709.1"/>
    <property type="molecule type" value="Genomic_DNA"/>
</dbReference>
<dbReference type="EMBL" id="CP002685">
    <property type="protein sequence ID" value="AEC05474.1"/>
    <property type="molecule type" value="Genomic_DNA"/>
</dbReference>
<dbReference type="EMBL" id="AK117653">
    <property type="protein sequence ID" value="BAC42307.1"/>
    <property type="molecule type" value="mRNA"/>
</dbReference>
<dbReference type="EMBL" id="BT005175">
    <property type="protein sequence ID" value="AAO50708.1"/>
    <property type="molecule type" value="mRNA"/>
</dbReference>
<dbReference type="EMBL" id="AY084339">
    <property type="protein sequence ID" value="AAM60922.1"/>
    <property type="molecule type" value="mRNA"/>
</dbReference>
<dbReference type="PIR" id="A84427">
    <property type="entry name" value="A84427"/>
</dbReference>
<dbReference type="RefSeq" id="NP_565268.1">
    <property type="nucleotide sequence ID" value="NM_126223.3"/>
</dbReference>
<dbReference type="SMR" id="Q9ZU90"/>
<dbReference type="BioGRID" id="94">
    <property type="interactions" value="9"/>
</dbReference>
<dbReference type="FunCoup" id="Q9ZU90">
    <property type="interactions" value="876"/>
</dbReference>
<dbReference type="IntAct" id="Q9ZU90">
    <property type="interactions" value="12"/>
</dbReference>
<dbReference type="STRING" id="3702.Q9ZU90"/>
<dbReference type="PaxDb" id="3702-AT2G01620.1"/>
<dbReference type="ProteomicsDB" id="232655"/>
<dbReference type="EnsemblPlants" id="AT2G01620.1">
    <property type="protein sequence ID" value="AT2G01620.1"/>
    <property type="gene ID" value="AT2G01620"/>
</dbReference>
<dbReference type="GeneID" id="814691"/>
<dbReference type="Gramene" id="AT2G01620.1">
    <property type="protein sequence ID" value="AT2G01620.1"/>
    <property type="gene ID" value="AT2G01620"/>
</dbReference>
<dbReference type="KEGG" id="ath:AT2G01620"/>
<dbReference type="Araport" id="AT2G01620"/>
<dbReference type="TAIR" id="AT2G01620">
    <property type="gene designation" value="MEE11"/>
</dbReference>
<dbReference type="eggNOG" id="ENOG502R97J">
    <property type="taxonomic scope" value="Eukaryota"/>
</dbReference>
<dbReference type="HOGENOM" id="CLU_076748_0_0_1"/>
<dbReference type="InParanoid" id="Q9ZU90"/>
<dbReference type="OMA" id="CEECGGC"/>
<dbReference type="PhylomeDB" id="Q9ZU90"/>
<dbReference type="UniPathway" id="UPA00143"/>
<dbReference type="PRO" id="PR:Q9ZU90"/>
<dbReference type="Proteomes" id="UP000006548">
    <property type="component" value="Chromosome 2"/>
</dbReference>
<dbReference type="ExpressionAtlas" id="Q9ZU90">
    <property type="expression patterns" value="baseline and differential"/>
</dbReference>
<dbReference type="GO" id="GO:0009793">
    <property type="term" value="P:embryo development ending in seed dormancy"/>
    <property type="evidence" value="ECO:0000315"/>
    <property type="project" value="TAIR"/>
</dbReference>
<dbReference type="GO" id="GO:0016567">
    <property type="term" value="P:protein ubiquitination"/>
    <property type="evidence" value="ECO:0007669"/>
    <property type="project" value="UniProtKB-UniPathway"/>
</dbReference>
<dbReference type="Gene3D" id="3.80.10.10">
    <property type="entry name" value="Ribonuclease Inhibitor"/>
    <property type="match status" value="1"/>
</dbReference>
<dbReference type="InterPro" id="IPR001810">
    <property type="entry name" value="F-box_dom"/>
</dbReference>
<dbReference type="InterPro" id="IPR050648">
    <property type="entry name" value="F-box_LRR-repeat"/>
</dbReference>
<dbReference type="InterPro" id="IPR032675">
    <property type="entry name" value="LRR_dom_sf"/>
</dbReference>
<dbReference type="PANTHER" id="PTHR13382:SF16">
    <property type="entry name" value="F-BOX PROTEIN SKIP28"/>
    <property type="match status" value="1"/>
</dbReference>
<dbReference type="PANTHER" id="PTHR13382">
    <property type="entry name" value="MITOCHONDRIAL ATP SYNTHASE COUPLING FACTOR B"/>
    <property type="match status" value="1"/>
</dbReference>
<dbReference type="Pfam" id="PF12937">
    <property type="entry name" value="F-box-like"/>
    <property type="match status" value="1"/>
</dbReference>
<dbReference type="SUPFAM" id="SSF52047">
    <property type="entry name" value="RNI-like"/>
    <property type="match status" value="1"/>
</dbReference>
<comment type="function">
    <text evidence="1 3">Component of SCF(ASK-cullin-F-box) E3 ubiquitin ligase complexes, which may mediate the ubiquitination and subsequent proteasomal degradation of target proteins (By similarity). Required during the endosperm development in embryos.</text>
</comment>
<comment type="pathway">
    <text>Protein modification; protein ubiquitination.</text>
</comment>
<comment type="subunit">
    <text evidence="1 2">Part of a SCF (ASK-cullin-F-box) protein ligase complex (By similarity). Interacts with SKP1A/ASK1 and CUL1.</text>
</comment>
<comment type="interaction">
    <interactant intactId="EBI-604427">
        <id>Q9ZU90</id>
    </interactant>
    <interactant intactId="EBI-530486">
        <id>P46639</id>
        <label>KNAT1</label>
    </interactant>
    <organismsDiffer>false</organismsDiffer>
    <experiments>3</experiments>
</comment>
<comment type="interaction">
    <interactant intactId="EBI-604427">
        <id>Q9ZU90</id>
    </interactant>
    <interactant intactId="EBI-1546246">
        <id>Q9FNV9</id>
        <label>MYB113</label>
    </interactant>
    <organismsDiffer>false</organismsDiffer>
    <experiments>3</experiments>
</comment>
<comment type="interaction">
    <interactant intactId="EBI-604427">
        <id>Q9ZU90</id>
    </interactant>
    <interactant intactId="EBI-532357">
        <id>Q39255</id>
        <label>SKP1A</label>
    </interactant>
    <organismsDiffer>false</organismsDiffer>
    <experiments>3</experiments>
</comment>
<comment type="domain">
    <text evidence="1">The F-box is necessary for the interaction with ASK proteins.</text>
</comment>
<protein>
    <recommendedName>
        <fullName>F-box protein SKIP28</fullName>
    </recommendedName>
    <alternativeName>
        <fullName>Protein MATERNAL EFFECT EMBRYO ARREST 11</fullName>
    </alternativeName>
    <alternativeName>
        <fullName>SKP1-interacting partner 28</fullName>
    </alternativeName>
</protein>
<organism>
    <name type="scientific">Arabidopsis thaliana</name>
    <name type="common">Mouse-ear cress</name>
    <dbReference type="NCBI Taxonomy" id="3702"/>
    <lineage>
        <taxon>Eukaryota</taxon>
        <taxon>Viridiplantae</taxon>
        <taxon>Streptophyta</taxon>
        <taxon>Embryophyta</taxon>
        <taxon>Tracheophyta</taxon>
        <taxon>Spermatophyta</taxon>
        <taxon>Magnoliopsida</taxon>
        <taxon>eudicotyledons</taxon>
        <taxon>Gunneridae</taxon>
        <taxon>Pentapetalae</taxon>
        <taxon>rosids</taxon>
        <taxon>malvids</taxon>
        <taxon>Brassicales</taxon>
        <taxon>Brassicaceae</taxon>
        <taxon>Camelineae</taxon>
        <taxon>Arabidopsis</taxon>
    </lineage>
</organism>
<name>SKI28_ARATH</name>
<proteinExistence type="evidence at protein level"/>
<reference key="1">
    <citation type="journal article" date="1999" name="Nature">
        <title>Sequence and analysis of chromosome 2 of the plant Arabidopsis thaliana.</title>
        <authorList>
            <person name="Lin X."/>
            <person name="Kaul S."/>
            <person name="Rounsley S.D."/>
            <person name="Shea T.P."/>
            <person name="Benito M.-I."/>
            <person name="Town C.D."/>
            <person name="Fujii C.Y."/>
            <person name="Mason T.M."/>
            <person name="Bowman C.L."/>
            <person name="Barnstead M.E."/>
            <person name="Feldblyum T.V."/>
            <person name="Buell C.R."/>
            <person name="Ketchum K.A."/>
            <person name="Lee J.J."/>
            <person name="Ronning C.M."/>
            <person name="Koo H.L."/>
            <person name="Moffat K.S."/>
            <person name="Cronin L.A."/>
            <person name="Shen M."/>
            <person name="Pai G."/>
            <person name="Van Aken S."/>
            <person name="Umayam L."/>
            <person name="Tallon L.J."/>
            <person name="Gill J.E."/>
            <person name="Adams M.D."/>
            <person name="Carrera A.J."/>
            <person name="Creasy T.H."/>
            <person name="Goodman H.M."/>
            <person name="Somerville C.R."/>
            <person name="Copenhaver G.P."/>
            <person name="Preuss D."/>
            <person name="Nierman W.C."/>
            <person name="White O."/>
            <person name="Eisen J.A."/>
            <person name="Salzberg S.L."/>
            <person name="Fraser C.M."/>
            <person name="Venter J.C."/>
        </authorList>
    </citation>
    <scope>NUCLEOTIDE SEQUENCE [LARGE SCALE GENOMIC DNA]</scope>
    <source>
        <strain>cv. Columbia</strain>
    </source>
</reference>
<reference key="2">
    <citation type="journal article" date="2017" name="Plant J.">
        <title>Araport11: a complete reannotation of the Arabidopsis thaliana reference genome.</title>
        <authorList>
            <person name="Cheng C.Y."/>
            <person name="Krishnakumar V."/>
            <person name="Chan A.P."/>
            <person name="Thibaud-Nissen F."/>
            <person name="Schobel S."/>
            <person name="Town C.D."/>
        </authorList>
    </citation>
    <scope>GENOME REANNOTATION</scope>
    <source>
        <strain>cv. Columbia</strain>
    </source>
</reference>
<reference key="3">
    <citation type="journal article" date="2002" name="Science">
        <title>Functional annotation of a full-length Arabidopsis cDNA collection.</title>
        <authorList>
            <person name="Seki M."/>
            <person name="Narusaka M."/>
            <person name="Kamiya A."/>
            <person name="Ishida J."/>
            <person name="Satou M."/>
            <person name="Sakurai T."/>
            <person name="Nakajima M."/>
            <person name="Enju A."/>
            <person name="Akiyama K."/>
            <person name="Oono Y."/>
            <person name="Muramatsu M."/>
            <person name="Hayashizaki Y."/>
            <person name="Kawai J."/>
            <person name="Carninci P."/>
            <person name="Itoh M."/>
            <person name="Ishii Y."/>
            <person name="Arakawa T."/>
            <person name="Shibata K."/>
            <person name="Shinagawa A."/>
            <person name="Shinozaki K."/>
        </authorList>
    </citation>
    <scope>NUCLEOTIDE SEQUENCE [LARGE SCALE MRNA]</scope>
    <source>
        <strain>cv. Columbia</strain>
    </source>
</reference>
<reference key="4">
    <citation type="journal article" date="2003" name="Science">
        <title>Empirical analysis of transcriptional activity in the Arabidopsis genome.</title>
        <authorList>
            <person name="Yamada K."/>
            <person name="Lim J."/>
            <person name="Dale J.M."/>
            <person name="Chen H."/>
            <person name="Shinn P."/>
            <person name="Palm C.J."/>
            <person name="Southwick A.M."/>
            <person name="Wu H.C."/>
            <person name="Kim C.J."/>
            <person name="Nguyen M."/>
            <person name="Pham P.K."/>
            <person name="Cheuk R.F."/>
            <person name="Karlin-Newmann G."/>
            <person name="Liu S.X."/>
            <person name="Lam B."/>
            <person name="Sakano H."/>
            <person name="Wu T."/>
            <person name="Yu G."/>
            <person name="Miranda M."/>
            <person name="Quach H.L."/>
            <person name="Tripp M."/>
            <person name="Chang C.H."/>
            <person name="Lee J.M."/>
            <person name="Toriumi M.J."/>
            <person name="Chan M.M."/>
            <person name="Tang C.C."/>
            <person name="Onodera C.S."/>
            <person name="Deng J.M."/>
            <person name="Akiyama K."/>
            <person name="Ansari Y."/>
            <person name="Arakawa T."/>
            <person name="Banh J."/>
            <person name="Banno F."/>
            <person name="Bowser L."/>
            <person name="Brooks S.Y."/>
            <person name="Carninci P."/>
            <person name="Chao Q."/>
            <person name="Choy N."/>
            <person name="Enju A."/>
            <person name="Goldsmith A.D."/>
            <person name="Gurjal M."/>
            <person name="Hansen N.F."/>
            <person name="Hayashizaki Y."/>
            <person name="Johnson-Hopson C."/>
            <person name="Hsuan V.W."/>
            <person name="Iida K."/>
            <person name="Karnes M."/>
            <person name="Khan S."/>
            <person name="Koesema E."/>
            <person name="Ishida J."/>
            <person name="Jiang P.X."/>
            <person name="Jones T."/>
            <person name="Kawai J."/>
            <person name="Kamiya A."/>
            <person name="Meyers C."/>
            <person name="Nakajima M."/>
            <person name="Narusaka M."/>
            <person name="Seki M."/>
            <person name="Sakurai T."/>
            <person name="Satou M."/>
            <person name="Tamse R."/>
            <person name="Vaysberg M."/>
            <person name="Wallender E.K."/>
            <person name="Wong C."/>
            <person name="Yamamura Y."/>
            <person name="Yuan S."/>
            <person name="Shinozaki K."/>
            <person name="Davis R.W."/>
            <person name="Theologis A."/>
            <person name="Ecker J.R."/>
        </authorList>
    </citation>
    <scope>NUCLEOTIDE SEQUENCE [LARGE SCALE MRNA]</scope>
    <source>
        <strain>cv. Columbia</strain>
    </source>
</reference>
<reference key="5">
    <citation type="submission" date="2002-03" db="EMBL/GenBank/DDBJ databases">
        <title>Full-length cDNA from Arabidopsis thaliana.</title>
        <authorList>
            <person name="Brover V.V."/>
            <person name="Troukhan M.E."/>
            <person name="Alexandrov N.A."/>
            <person name="Lu Y.-P."/>
            <person name="Flavell R.B."/>
            <person name="Feldmann K.A."/>
        </authorList>
    </citation>
    <scope>NUCLEOTIDE SEQUENCE [LARGE SCALE MRNA]</scope>
</reference>
<reference key="6">
    <citation type="journal article" date="2003" name="Plant J.">
        <title>Protein interaction analysis of SCF ubiquitin E3 ligase subunits from Arabidopsis.</title>
        <authorList>
            <person name="Risseeuw E.P."/>
            <person name="Daskalchuk T.E."/>
            <person name="Banks T.W."/>
            <person name="Liu E."/>
            <person name="Cotelesage J."/>
            <person name="Hellmann H."/>
            <person name="Estelle M."/>
            <person name="Somers D.E."/>
            <person name="Crosby W.L."/>
        </authorList>
    </citation>
    <scope>INTERACTION WITH SKP1A/ASK1 AND CUL1</scope>
</reference>
<reference key="7">
    <citation type="journal article" date="2005" name="Development">
        <title>Genetic and molecular identification of genes required for female gametophyte development and function in Arabidopsis.</title>
        <authorList>
            <person name="Pagnussat G.C."/>
            <person name="Yu H.-J."/>
            <person name="Ngo Q.A."/>
            <person name="Rajani S."/>
            <person name="Mayalagu S."/>
            <person name="Johnson C.S."/>
            <person name="Capron A."/>
            <person name="Xie L.-F."/>
            <person name="Ye D."/>
            <person name="Sundaresan V."/>
        </authorList>
    </citation>
    <scope>FUNCTION</scope>
</reference>
<evidence type="ECO:0000250" key="1"/>
<evidence type="ECO:0000269" key="2">
    <source>
    </source>
</evidence>
<evidence type="ECO:0000269" key="3">
    <source>
    </source>
</evidence>
<evidence type="ECO:0000305" key="4"/>
<sequence>MKTELEEEEEEEWRSVHEVLLIVLPYLHSLFELLSMIRVSRSLRDAIRDETALWTKLVIEPPLSSRLTDDILSEFSSKSAGKLKTLILRQCLMVTNKGLRRVVDANPLITKIIVPGCSGLTPEGIMECVESLSKNNHKLETLHINGVNGFTKQHLSALYTYLSSEGTIDLEVCPKCDEVRMIPSCSRESCNQKQRKCRGCWLCIPRCAECAVCLVGSDTESQEAACGNDDVLCLECWLVLPKCRFCNKPYCTNHSSRRHEIAITDAASRPSFECEACYYRAGTNPYEVDYQI</sequence>
<feature type="chain" id="PRO_0000375240" description="F-box protein SKIP28">
    <location>
        <begin position="1"/>
        <end position="292"/>
    </location>
</feature>
<feature type="domain" description="F-box; degenerate">
    <location>
        <begin position="21"/>
        <end position="79"/>
    </location>
</feature>
<feature type="sequence conflict" description="In Ref. 5; AAM60922." evidence="4" ref="5">
    <original>FS</original>
    <variation>IT</variation>
    <location>
        <begin position="75"/>
        <end position="76"/>
    </location>
</feature>
<keyword id="KW-0217">Developmental protein</keyword>
<keyword id="KW-1185">Reference proteome</keyword>
<keyword id="KW-0833">Ubl conjugation pathway</keyword>